<name>ENV_HV1MN</name>
<comment type="function">
    <molecule>Envelope glycoprotein gp160</molecule>
    <text evidence="1">Oligomerizes in the host endoplasmic reticulum into predominantly trimers. In a second time, gp160 transits in the host Golgi, where glycosylation is completed. The precursor is then proteolytically cleaved in the trans-Golgi and thereby activated by cellular furin or furin-like proteases to produce gp120 and gp41.</text>
</comment>
<comment type="function">
    <molecule>Surface protein gp120</molecule>
    <text evidence="1">Attaches the virus to the host lymphoid cell by binding to the primary receptor CD4. This interaction induces a structural rearrangement creating a high affinity binding site for a chemokine coreceptor like CXCR4 and/or CCR5. Acts as a ligand for CD209/DC-SIGN and CLEC4M/DC-SIGNR, which are respectively found on dendritic cells (DCs), and on endothelial cells of liver sinusoids and lymph node sinuses. These interactions allow capture of viral particles at mucosal surfaces by these cells and subsequent transmission to permissive cells. HIV subverts the migration properties of dendritic cells to gain access to CD4+ T-cells in lymph nodes. Virus transmission to permissive T-cells occurs either in trans (without DCs infection, through viral capture and transmission), or in cis (following DCs productive infection, through the usual CD4-gp120 interaction), thereby inducing a robust infection. In trans infection, bound virions remain infectious over days and it is proposed that they are not degraded, but protected in non-lysosomal acidic organelles within the DCs close to the cell membrane thus contributing to the viral infectious potential during DCs' migration from the periphery to the lymphoid tissues. On arrival at lymphoid tissues, intact virions recycle back to DCs' cell surface allowing virus transmission to CD4+ T-cells.</text>
</comment>
<comment type="function">
    <molecule>Transmembrane protein gp41</molecule>
    <text evidence="1">Acts as a class I viral fusion protein. Under the current model, the protein has at least 3 conformational states: pre-fusion native state, pre-hairpin intermediate state, and post-fusion hairpin state. During fusion of viral and target intracellular membranes, the coiled coil regions (heptad repeats) assume a trimer-of-hairpins structure, positioning the fusion peptide in close proximity to the C-terminal region of the ectodomain. The formation of this structure appears to drive apposition and subsequent fusion of viral and target cell membranes. Complete fusion occurs in host cell endosomes and is dynamin-dependent, however some lipid transfer might occur at the plasma membrane. The virus undergoes clathrin-dependent internalization long before endosomal fusion, thus minimizing the surface exposure of conserved viral epitopes during fusion and reducing the efficacy of inhibitors targeting these epitopes. Membranes fusion leads to delivery of the nucleocapsid into the cytoplasm.</text>
</comment>
<comment type="subunit">
    <molecule>Surface protein gp120</molecule>
    <text evidence="1">The mature envelope protein (Env) consists of a homotrimer of non-covalently associated gp120-gp41 heterodimers. The resulting complex protrudes from the virus surface as a spike. There seems to be as few as 10 spikes on the average virion. Interacts with host CD4, CCR5 and CXCR4. Gp120 also interacts with the C-type lectins CD209/DC-SIGN and CLEC4M/DC-SIGNR (collectively referred to as DC-SIGN(R)). Gp120 and gp41 interact with GalCer. Gp120 interacts with host ITGA4/ITGB7 complex; on CD4+ T-cells, this interaction results in rapid activation of integrin ITGAL/LFA-1, which facilitates efficient cell-to-cell spreading of HIV-1. Gp120 interacts with cell-associated heparan sulfate; this interaction increases virus infectivity on permissive cells and may be involved in infection of CD4- cells.</text>
</comment>
<comment type="subunit">
    <molecule>Transmembrane protein gp41</molecule>
    <text evidence="1">The mature envelope protein (Env) consists of a homotrimer of non-covalently associated gp120-gp41 heterodimers. The resulting complex protrudes from the virus surface as a spike. There seems to be as few as 10 spikes on the average virion.</text>
</comment>
<comment type="interaction">
    <interactant intactId="EBI-9255299">
        <id>P05877</id>
    </interactant>
    <interactant intactId="EBI-9255299">
        <id>P05877</id>
        <label>env</label>
    </interactant>
    <organismsDiffer>false</organismsDiffer>
    <experiments>6</experiments>
</comment>
<comment type="subcellular location">
    <molecule>Surface protein gp120</molecule>
    <subcellularLocation>
        <location evidence="1">Virion membrane</location>
        <topology evidence="1">Peripheral membrane protein</topology>
    </subcellularLocation>
    <subcellularLocation>
        <location evidence="1">Host cell membrane</location>
        <topology evidence="1">Peripheral membrane protein</topology>
    </subcellularLocation>
    <subcellularLocation>
        <location evidence="1">Host endosome membrane</location>
        <topology evidence="1">Single-pass type I membrane protein</topology>
    </subcellularLocation>
    <text evidence="1">The surface protein is not anchored to the viral envelope, but associates with the extravirion surface through its binding to TM. It is probably concentrated at the site of budding and incorporated into the virions possibly by contacts between the cytoplasmic tail of Env and the N-terminus of Gag.</text>
</comment>
<comment type="subcellular location">
    <molecule>Transmembrane protein gp41</molecule>
    <subcellularLocation>
        <location evidence="1">Virion membrane</location>
        <topology evidence="1">Single-pass type I membrane protein</topology>
    </subcellularLocation>
    <subcellularLocation>
        <location evidence="1">Host cell membrane</location>
        <topology evidence="1">Single-pass type I membrane protein</topology>
    </subcellularLocation>
    <subcellularLocation>
        <location evidence="1">Host endosome membrane</location>
        <topology evidence="1">Single-pass type I membrane protein</topology>
    </subcellularLocation>
    <text evidence="1">It is probably concentrated at the site of budding and incorporated into the virions possibly by contacts between the cytoplasmic tail of Env and the N-terminus of Gag.</text>
</comment>
<comment type="domain">
    <text evidence="1">Some of the most genetically diverse regions of the viral genome are present in Env. They are called variable regions 1 through 5 (V1 through V5). Coreceptor usage of gp120 is determined mainly by the primary structure of the third variable region (V3) in the outer domain of gp120. The sequence of V3 determines which coreceptor, CCR5 and/or CXCR4 (corresponding to R5/macrophage, X4/T cell and R5X4/T cell and macrophage tropism), is used to trigger the fusion potential of the Env complex, and hence which cells the virus can infect. Binding to CCR5 involves a region adjacent in addition to V3.</text>
</comment>
<comment type="domain">
    <text evidence="1">The membrane proximal external region (MPER) present in gp41 is a tryptophan-rich region recognized by the antibodies 2F5, Z13, and 4E10. MPER seems to play a role in fusion.</text>
</comment>
<comment type="domain">
    <text evidence="1">The 17 amino acids long immunosuppressive region is present in many retroviral envelope proteins. Synthetic peptides derived from this relatively conserved sequence inhibit immune function in vitro and in vivo.</text>
</comment>
<comment type="domain">
    <text evidence="1">The YXXL motif is involved in determining the exact site of viral release at the surface of infected mononuclear cells and promotes endocytosis. YXXL and di-leucine endocytosis motifs interact directly or indirectly with the clathrin adapter complexes, opperate independently, and their activities are not additive.</text>
</comment>
<comment type="domain">
    <text evidence="1">The CD4-binding region is targeted by the antibody b12.</text>
</comment>
<comment type="PTM">
    <text evidence="1">Highly glycosylated by host. The high number of glycan on the protein is reffered to as 'glycan shield' because it contributes to hide protein sequence from adaptive immune system.</text>
</comment>
<comment type="PTM">
    <text evidence="1">Palmitoylation of the transmembrane protein and of Env polyprotein (prior to its proteolytic cleavage) is essential for their association with host cell membrane lipid rafts. Palmitoylation is therefore required for envelope trafficking to classical lipid rafts, but not for viral replication.</text>
</comment>
<comment type="PTM">
    <text evidence="1">Specific enzymatic cleavages in vivo yield mature proteins. Envelope glycoproteins are synthesized as an inactive precursor that is heavily N-glycosylated and processed likely by host cell furin in the Golgi to yield the mature SU and TM proteins. The cleavage site between SU and TM requires the minimal sequence [KR]-X-[KR]-R. About 2 of the 9 disulfide bonds of gp41 are reduced by P4HB/PDI, following binding to CD4 receptor.</text>
</comment>
<comment type="miscellaneous">
    <text evidence="1">Inhibitors targeting HIV-1 viral envelope proteins are used as antiretroviral drugs. Attachment of virions to the cell surface via non-specific interactions and CD4 binding can be blocked by inhibitors that include cyanovirin-N, cyclotriazadisulfonamide analogs, PRO 2000, TNX 355 and PRO 542. In addition, BMS 806 can block CD4-induced conformational changes. Env interactions with the coreceptor molecules can be targeted by CCR5 antagonists including SCH-D, maraviroc (UK 427857) and aplaviroc (GW 873140), and the CXCR4 antagonist AMD 070. Fusion of viral and cellular membranes can be inhibited by peptides such as enfuvirtide and tifuvirtide (T 1249). Resistance to inhibitors associated with mutations in Env are observed. Most of the time, single mutations confer only a modest reduction in drug susceptibility. Combination of several mutations is usually required to develop a high-level drug resistance.</text>
</comment>
<comment type="miscellaneous">
    <text evidence="1">HIV-1 lineages are divided in three main groups, M (for Major), O (for Outlier), and N (for New, or Non-M, Non-O). The vast majority of strains found worldwide belong to the group M. Group O seems to be endemic to and largely confined to Cameroon and neighboring countries in West Central Africa, where these viruses represent a small minority of HIV-1 strains. The group N is represented by a limited number of isolates from Cameroonian persons. The group M is further subdivided in 9 clades or subtypes (A to D, F to H, J and K).</text>
</comment>
<comment type="similarity">
    <text evidence="1">Belongs to the HIV-1 env protein family.</text>
</comment>
<comment type="online information" name="hivdb">
    <link uri="https://hivdb.stanford.edu"/>
    <text>HIV drug resistance database</text>
</comment>
<comment type="online information" name="HIV drug resistance mutations">
    <link uri="https://www.iasusa.org/hiv-drug-resistance/hiv-drug-resistance-mutations/"/>
</comment>
<sequence length="856" mass="97140">MRVKGIRRNYQHWWGWGTMLLGLLMICSATEKLWVTVYYGVPVWKEATTTLFCASDAKAYDTEVHNVWATQACVPTDPNPQEVELVNVTENFNMWKNNMVEQMHEDIISLWDQSLKPCVKLTPLCVTLNCTDLRNTTNTNNSTANNNSNSEGTIKGGEMKNCSFNITTSIRDKMQKEYALLYKLDIVSIDNDSTSYRLISCNTSVITQACPKISFEPIPIHYCAPAGFAILKCNDKKFSGKGSCKNVSTVQCTHGIRPVVSTQLLLNGSLAEEEVVIRSENFTDNAKTIIVHLNESVQINCTRPNYNKRKRIHIGPGRAFYTTKNIIGTIRQAHCNISRAKWNDTLRQIVSKLKEQFKNKTIVFNQSSGGDPEIVMHSFNCGGEFFYCNTSPLFNSTWNGNNTWNNTTGSNNNITLQCKIKQIINMWQEVGKAMYAPPIEGQIRCSSNITGLLLTRDGGKDTDTNDTEIFRPGGGDMRDNWRSELYKYKVVTIEPLGVAPTKAKRRVVQREKRAAIGALFLGFLGAAGSTMGAASVTLTVQARLLLSGIVQQQNNLLRAIEAQQHMLQLTVWGIKQLQARVLAVERYLKDQQLLGFWGCSGKLICTTTVPWNASWSNKSLDDIWNNMTWMQWEREIDNYTSLIYSLLEKSQTQQEKNEQELLELDKWASLWNWFDITNWLWYIKIFIMIVGGLVGLRIVFAVLSIVNRVRQGYSPLSLQTRPPVPRGPDRPEGIEEEGGERDRDTSGRLVHGFLAIIWVDLRSLFLFSYHHRDLLLIAARIVELLGRRGWEVLKYWWNLLQYWSQELKSSAVSLLNATAIAVAEGTDRVIEVLQRAGRAILHIPTRIRQGLERALL</sequence>
<accession>P05877</accession>
<proteinExistence type="evidence at protein level"/>
<gene>
    <name evidence="1" type="primary">env</name>
</gene>
<organismHost>
    <name type="scientific">Homo sapiens</name>
    <name type="common">Human</name>
    <dbReference type="NCBI Taxonomy" id="9606"/>
</organismHost>
<keyword id="KW-0002">3D-structure</keyword>
<keyword id="KW-0014">AIDS</keyword>
<keyword id="KW-0053">Apoptosis</keyword>
<keyword id="KW-1165">Clathrin-mediated endocytosis of virus by host</keyword>
<keyword id="KW-0165">Cleavage on pair of basic residues</keyword>
<keyword id="KW-0175">Coiled coil</keyword>
<keyword id="KW-1015">Disulfide bond</keyword>
<keyword id="KW-1170">Fusion of virus membrane with host endosomal membrane</keyword>
<keyword id="KW-1168">Fusion of virus membrane with host membrane</keyword>
<keyword id="KW-0325">Glycoprotein</keyword>
<keyword id="KW-1032">Host cell membrane</keyword>
<keyword id="KW-1039">Host endosome</keyword>
<keyword id="KW-1043">Host membrane</keyword>
<keyword id="KW-0945">Host-virus interaction</keyword>
<keyword id="KW-0449">Lipoprotein</keyword>
<keyword id="KW-0472">Membrane</keyword>
<keyword id="KW-0564">Palmitate</keyword>
<keyword id="KW-1185">Reference proteome</keyword>
<keyword id="KW-0732">Signal</keyword>
<keyword id="KW-0812">Transmembrane</keyword>
<keyword id="KW-1133">Transmembrane helix</keyword>
<keyword id="KW-1161">Viral attachment to host cell</keyword>
<keyword id="KW-0261">Viral envelope protein</keyword>
<keyword id="KW-0899">Viral immunoevasion</keyword>
<keyword id="KW-1162">Viral penetration into host cytoplasm</keyword>
<keyword id="KW-0946">Virion</keyword>
<keyword id="KW-1164">Virus endocytosis by host</keyword>
<keyword id="KW-1160">Virus entry into host cell</keyword>
<reference key="1">
    <citation type="journal article" date="1988" name="Virology">
        <title>Envelope sequences of two new United States HIV-1 isolates.</title>
        <authorList>
            <person name="Gurgo C."/>
            <person name="Guo H.-G."/>
            <person name="Franchini G."/>
            <person name="Aldovini A."/>
            <person name="Collalti E."/>
            <person name="Farrell K."/>
            <person name="Wong-Staal F."/>
            <person name="Gallo R.C."/>
            <person name="Reitz M.S. Jr."/>
        </authorList>
    </citation>
    <scope>NUCLEOTIDE SEQUENCE [GENOMIC RNA]</scope>
</reference>
<reference key="2">
    <citation type="journal article" date="1999" name="J. Virol.">
        <title>Identification of CXCR4 domains that support coreceptor and chemokine receptor functions.</title>
        <authorList>
            <person name="Doranz B.J."/>
            <person name="Orsini M.J."/>
            <person name="Turner J.D."/>
            <person name="Hoffman T.L."/>
            <person name="Berson J.F."/>
            <person name="Hoxie J.A."/>
            <person name="Peiper S.C."/>
            <person name="Brass L.F."/>
            <person name="Doms R.W."/>
        </authorList>
    </citation>
    <scope>INTERACTION OF SURFACE PROTEIN GP120 WITH HUMAN CXCR4</scope>
</reference>
<reference key="3">
    <citation type="journal article" date="2003" name="APMIS">
        <title>Pathogens target DC-SIGN to influence their fate DC-SIGN functions as a pathogen receptor with broad specificity.</title>
        <authorList>
            <person name="Geijtenbeek T.B."/>
            <person name="van Kooyk Y."/>
        </authorList>
    </citation>
    <scope>REVIEW</scope>
</reference>
<reference key="4">
    <citation type="journal article" date="2003" name="Biochim. Biophys. Acta">
        <title>The HIV Env-mediated fusion reaction.</title>
        <authorList>
            <person name="Gallo S.A."/>
            <person name="Finnegan C.M."/>
            <person name="Viard M."/>
            <person name="Raviv Y."/>
            <person name="Dimitrov A."/>
            <person name="Rawat S.S."/>
            <person name="Puri A."/>
            <person name="Durell S."/>
            <person name="Blumenthal R."/>
        </authorList>
    </citation>
    <scope>REVIEW</scope>
</reference>
<reference key="5">
    <citation type="journal article" date="2005" name="Cell Death Differ.">
        <title>Mechanisms of apoptosis induction by the HIV-1 envelope.</title>
        <authorList>
            <person name="Perfettini J.-L."/>
            <person name="Castedo M."/>
            <person name="Roumier T."/>
            <person name="Andreau K."/>
            <person name="Nardacci R."/>
            <person name="Piacentini M."/>
            <person name="Kroemer G."/>
        </authorList>
    </citation>
    <scope>REVIEW</scope>
</reference>
<reference key="6">
    <citation type="journal article" date="2005" name="AIDS Res. Hum. Retroviruses">
        <title>V3: HIV's switch-hitter.</title>
        <authorList>
            <person name="Hartley O."/>
            <person name="Klasse P.J."/>
            <person name="Sattentau Q.J."/>
            <person name="Moore J.P."/>
        </authorList>
    </citation>
    <scope>REVIEW</scope>
</reference>
<reference key="7">
    <citation type="journal article" date="2005" name="Drugs">
        <title>Emerging drug targets for antiretroviral therapy.</title>
        <authorList>
            <person name="Reeves J.D."/>
            <person name="Piefer A.J."/>
        </authorList>
    </citation>
    <scope>REVIEW</scope>
</reference>
<reference key="8">
    <citation type="journal article" date="2006" name="EMBO J.">
        <title>HIV and the chemokine system: 10 years later.</title>
        <authorList>
            <person name="Lusso P."/>
        </authorList>
    </citation>
    <scope>REVIEW</scope>
</reference>
<reference key="9">
    <citation type="journal article" date="2003" name="Proc. Natl. Acad. Sci. U.S.A.">
        <title>Electron tomography analysis of envelope glycoprotein trimers on HIV and simian immunodeficiency virus virions.</title>
        <authorList>
            <person name="Zhu P."/>
            <person name="Chertova E."/>
            <person name="Bess J. Jr."/>
            <person name="Lifson J.D."/>
            <person name="Arthur L.O."/>
            <person name="Liu J."/>
            <person name="Taylor K.A."/>
            <person name="Roux K.H."/>
        </authorList>
    </citation>
    <scope>3D-STRUCTURE OF ENVELOPE GLYCOPROTEIN TRIMERS BY ELECTRON TOMOGRAPHY</scope>
</reference>
<dbReference type="EMBL" id="M17449">
    <property type="protein sequence ID" value="AAA44857.1"/>
    <property type="molecule type" value="Genomic_RNA"/>
</dbReference>
<dbReference type="PDB" id="1ACY">
    <property type="method" value="X-ray"/>
    <property type="resolution" value="3.00 A"/>
    <property type="chains" value="P=306-328"/>
</dbReference>
<dbReference type="PDB" id="1AI1">
    <property type="method" value="X-ray"/>
    <property type="resolution" value="2.80 A"/>
    <property type="chains" value="P=306-328"/>
</dbReference>
<dbReference type="PDB" id="1F58">
    <property type="method" value="X-ray"/>
    <property type="resolution" value="2.00 A"/>
    <property type="chains" value="P=306-328"/>
</dbReference>
<dbReference type="PDB" id="1GGI">
    <property type="method" value="X-ray"/>
    <property type="resolution" value="2.80 A"/>
    <property type="chains" value="P/Q=310-323"/>
</dbReference>
<dbReference type="PDB" id="1K5M">
    <property type="method" value="X-ray"/>
    <property type="resolution" value="2.70 A"/>
    <property type="chains" value="B=314-325"/>
</dbReference>
<dbReference type="PDB" id="1NAK">
    <property type="method" value="X-ray"/>
    <property type="resolution" value="2.57 A"/>
    <property type="chains" value="P/Q=310-323"/>
</dbReference>
<dbReference type="PDB" id="1NIZ">
    <property type="method" value="NMR"/>
    <property type="chains" value="A=309-324"/>
</dbReference>
<dbReference type="PDB" id="1NJ0">
    <property type="method" value="NMR"/>
    <property type="chains" value="A=309-324"/>
</dbReference>
<dbReference type="PDB" id="1Q1J">
    <property type="method" value="X-ray"/>
    <property type="resolution" value="2.50 A"/>
    <property type="chains" value="P/Q=310-323"/>
</dbReference>
<dbReference type="PDB" id="2B0S">
    <property type="method" value="X-ray"/>
    <property type="resolution" value="2.30 A"/>
    <property type="chains" value="P=308-323"/>
</dbReference>
<dbReference type="PDB" id="2QSC">
    <property type="method" value="X-ray"/>
    <property type="resolution" value="2.80 A"/>
    <property type="chains" value="P=309-323"/>
</dbReference>
<dbReference type="PDB" id="3E6H">
    <property type="method" value="X-ray"/>
    <property type="resolution" value="2.10 A"/>
    <property type="chains" value="P=314-322"/>
</dbReference>
<dbReference type="PDB" id="3GO1">
    <property type="method" value="X-ray"/>
    <property type="resolution" value="1.89 A"/>
    <property type="chains" value="P=309-322"/>
</dbReference>
<dbReference type="PDB" id="3MLW">
    <property type="method" value="X-ray"/>
    <property type="resolution" value="2.70 A"/>
    <property type="chains" value="P/Q=306-328"/>
</dbReference>
<dbReference type="PDB" id="3MLX">
    <property type="method" value="X-ray"/>
    <property type="resolution" value="1.90 A"/>
    <property type="chains" value="P/Q=306-328"/>
</dbReference>
<dbReference type="PDB" id="3UJI">
    <property type="method" value="X-ray"/>
    <property type="resolution" value="1.60 A"/>
    <property type="chains" value="P=306-328"/>
</dbReference>
<dbReference type="PDB" id="4M1D">
    <property type="method" value="X-ray"/>
    <property type="resolution" value="1.80 A"/>
    <property type="chains" value="P/Q=311-322"/>
</dbReference>
<dbReference type="PDB" id="4XAW">
    <property type="method" value="X-ray"/>
    <property type="resolution" value="1.47 A"/>
    <property type="chains" value="P=672-684"/>
</dbReference>
<dbReference type="PDB" id="4XBE">
    <property type="method" value="X-ray"/>
    <property type="resolution" value="1.76 A"/>
    <property type="chains" value="P=672-684"/>
</dbReference>
<dbReference type="PDB" id="4XC1">
    <property type="method" value="X-ray"/>
    <property type="resolution" value="1.63 A"/>
    <property type="chains" value="P=672-684"/>
</dbReference>
<dbReference type="PDB" id="4XC3">
    <property type="method" value="X-ray"/>
    <property type="resolution" value="1.63 A"/>
    <property type="chains" value="P=672-684"/>
</dbReference>
<dbReference type="PDB" id="4XCF">
    <property type="method" value="X-ray"/>
    <property type="resolution" value="1.43 A"/>
    <property type="chains" value="P=672-684"/>
</dbReference>
<dbReference type="PDB" id="4XMK">
    <property type="method" value="X-ray"/>
    <property type="resolution" value="3.18 A"/>
    <property type="chains" value="P/Q/R=312-322"/>
</dbReference>
<dbReference type="PDB" id="5KD4">
    <property type="method" value="X-ray"/>
    <property type="resolution" value="3.05 A"/>
    <property type="chains" value="P/Q=314-321"/>
</dbReference>
<dbReference type="PDB" id="5KD7">
    <property type="method" value="X-ray"/>
    <property type="resolution" value="2.35 A"/>
    <property type="chains" value="E/H/K/P=314-321"/>
</dbReference>
<dbReference type="PDB" id="5T7G">
    <property type="method" value="X-ray"/>
    <property type="resolution" value="1.96 A"/>
    <property type="chains" value="P/Q=314-322"/>
</dbReference>
<dbReference type="PDB" id="6DB6">
    <property type="method" value="X-ray"/>
    <property type="resolution" value="1.98 A"/>
    <property type="chains" value="P=306-328"/>
</dbReference>
<dbReference type="PDB" id="6DB7">
    <property type="method" value="X-ray"/>
    <property type="resolution" value="2.21 A"/>
    <property type="chains" value="P/Q=306-328"/>
</dbReference>
<dbReference type="PDB" id="6MNS">
    <property type="method" value="X-ray"/>
    <property type="resolution" value="2.70 A"/>
    <property type="chains" value="P/Q=306-328"/>
</dbReference>
<dbReference type="PDB" id="6SH9">
    <property type="method" value="X-ray"/>
    <property type="resolution" value="2.40 A"/>
    <property type="chains" value="E=310-323"/>
</dbReference>
<dbReference type="PDBsum" id="1ACY"/>
<dbReference type="PDBsum" id="1AI1"/>
<dbReference type="PDBsum" id="1F58"/>
<dbReference type="PDBsum" id="1GGI"/>
<dbReference type="PDBsum" id="1K5M"/>
<dbReference type="PDBsum" id="1NAK"/>
<dbReference type="PDBsum" id="1NIZ"/>
<dbReference type="PDBsum" id="1NJ0"/>
<dbReference type="PDBsum" id="1Q1J"/>
<dbReference type="PDBsum" id="2B0S"/>
<dbReference type="PDBsum" id="2QSC"/>
<dbReference type="PDBsum" id="3E6H"/>
<dbReference type="PDBsum" id="3GO1"/>
<dbReference type="PDBsum" id="3MLW"/>
<dbReference type="PDBsum" id="3MLX"/>
<dbReference type="PDBsum" id="3UJI"/>
<dbReference type="PDBsum" id="4M1D"/>
<dbReference type="PDBsum" id="4XAW"/>
<dbReference type="PDBsum" id="4XBE"/>
<dbReference type="PDBsum" id="4XC1"/>
<dbReference type="PDBsum" id="4XC3"/>
<dbReference type="PDBsum" id="4XCF"/>
<dbReference type="PDBsum" id="4XMK"/>
<dbReference type="PDBsum" id="5KD4"/>
<dbReference type="PDBsum" id="5KD7"/>
<dbReference type="PDBsum" id="5T7G"/>
<dbReference type="PDBsum" id="6DB6"/>
<dbReference type="PDBsum" id="6DB7"/>
<dbReference type="PDBsum" id="6MNS"/>
<dbReference type="PDBsum" id="6SH9"/>
<dbReference type="BMRB" id="P05877"/>
<dbReference type="SMR" id="P05877"/>
<dbReference type="MINT" id="P05877"/>
<dbReference type="GlyCosmos" id="P05877">
    <property type="glycosylation" value="30 sites, No reported glycans"/>
</dbReference>
<dbReference type="ABCD" id="P05877">
    <property type="antibodies" value="12 sequenced antibodies"/>
</dbReference>
<dbReference type="Reactome" id="R-HSA-5621480">
    <property type="pathway name" value="Dectin-2 family"/>
</dbReference>
<dbReference type="EvolutionaryTrace" id="P05877"/>
<dbReference type="Proteomes" id="UP000007697">
    <property type="component" value="Genome"/>
</dbReference>
<dbReference type="GO" id="GO:0044175">
    <property type="term" value="C:host cell endosome membrane"/>
    <property type="evidence" value="ECO:0007669"/>
    <property type="project" value="UniProtKB-SubCell"/>
</dbReference>
<dbReference type="GO" id="GO:0020002">
    <property type="term" value="C:host cell plasma membrane"/>
    <property type="evidence" value="ECO:0007669"/>
    <property type="project" value="UniProtKB-SubCell"/>
</dbReference>
<dbReference type="GO" id="GO:0016020">
    <property type="term" value="C:membrane"/>
    <property type="evidence" value="ECO:0007669"/>
    <property type="project" value="UniProtKB-UniRule"/>
</dbReference>
<dbReference type="GO" id="GO:0019031">
    <property type="term" value="C:viral envelope"/>
    <property type="evidence" value="ECO:0007669"/>
    <property type="project" value="UniProtKB-KW"/>
</dbReference>
<dbReference type="GO" id="GO:0055036">
    <property type="term" value="C:virion membrane"/>
    <property type="evidence" value="ECO:0007669"/>
    <property type="project" value="UniProtKB-SubCell"/>
</dbReference>
<dbReference type="GO" id="GO:0042802">
    <property type="term" value="F:identical protein binding"/>
    <property type="evidence" value="ECO:0000353"/>
    <property type="project" value="IntAct"/>
</dbReference>
<dbReference type="GO" id="GO:0005198">
    <property type="term" value="F:structural molecule activity"/>
    <property type="evidence" value="ECO:0007669"/>
    <property type="project" value="UniProtKB-UniRule"/>
</dbReference>
<dbReference type="GO" id="GO:0075512">
    <property type="term" value="P:clathrin-dependent endocytosis of virus by host cell"/>
    <property type="evidence" value="ECO:0007669"/>
    <property type="project" value="UniProtKB-UniRule"/>
</dbReference>
<dbReference type="GO" id="GO:0039654">
    <property type="term" value="P:fusion of virus membrane with host endosome membrane"/>
    <property type="evidence" value="ECO:0007669"/>
    <property type="project" value="UniProtKB-UniRule"/>
</dbReference>
<dbReference type="GO" id="GO:0019064">
    <property type="term" value="P:fusion of virus membrane with host plasma membrane"/>
    <property type="evidence" value="ECO:0007669"/>
    <property type="project" value="UniProtKB-UniRule"/>
</dbReference>
<dbReference type="GO" id="GO:1903908">
    <property type="term" value="P:positive regulation of plasma membrane raft polarization"/>
    <property type="evidence" value="ECO:0007669"/>
    <property type="project" value="UniProtKB-UniRule"/>
</dbReference>
<dbReference type="GO" id="GO:1903911">
    <property type="term" value="P:positive regulation of receptor clustering"/>
    <property type="evidence" value="ECO:0007669"/>
    <property type="project" value="UniProtKB-UniRule"/>
</dbReference>
<dbReference type="GO" id="GO:0019082">
    <property type="term" value="P:viral protein processing"/>
    <property type="evidence" value="ECO:0007669"/>
    <property type="project" value="UniProtKB-UniRule"/>
</dbReference>
<dbReference type="GO" id="GO:0019062">
    <property type="term" value="P:virion attachment to host cell"/>
    <property type="evidence" value="ECO:0007669"/>
    <property type="project" value="UniProtKB-UniRule"/>
</dbReference>
<dbReference type="CDD" id="cd09909">
    <property type="entry name" value="HIV-1-like_HR1-HR2"/>
    <property type="match status" value="1"/>
</dbReference>
<dbReference type="FunFam" id="1.10.287.210:FF:000001">
    <property type="entry name" value="Envelope glycoprotein gp160"/>
    <property type="match status" value="1"/>
</dbReference>
<dbReference type="FunFam" id="1.20.5.490:FF:000001">
    <property type="entry name" value="Envelope glycoprotein gp160"/>
    <property type="match status" value="1"/>
</dbReference>
<dbReference type="FunFam" id="2.170.40.20:FF:000001">
    <property type="entry name" value="Envelope glycoprotein gp160"/>
    <property type="match status" value="1"/>
</dbReference>
<dbReference type="FunFam" id="2.170.40.20:FF:000003">
    <property type="entry name" value="Envelope glycoprotein gp160"/>
    <property type="match status" value="1"/>
</dbReference>
<dbReference type="Gene3D" id="1.10.287.210">
    <property type="match status" value="1"/>
</dbReference>
<dbReference type="Gene3D" id="2.170.40.20">
    <property type="entry name" value="Human immunodeficiency virus 1, Gp160, envelope glycoprotein"/>
    <property type="match status" value="2"/>
</dbReference>
<dbReference type="Gene3D" id="1.20.5.490">
    <property type="entry name" value="Single helix bin"/>
    <property type="match status" value="1"/>
</dbReference>
<dbReference type="HAMAP" id="MF_04083">
    <property type="entry name" value="HIV_ENV"/>
    <property type="match status" value="1"/>
</dbReference>
<dbReference type="InterPro" id="IPR036377">
    <property type="entry name" value="Gp120_core_sf"/>
</dbReference>
<dbReference type="InterPro" id="IPR037527">
    <property type="entry name" value="Gp160"/>
</dbReference>
<dbReference type="InterPro" id="IPR000328">
    <property type="entry name" value="GP41-like"/>
</dbReference>
<dbReference type="InterPro" id="IPR000777">
    <property type="entry name" value="HIV1_Gp120"/>
</dbReference>
<dbReference type="Pfam" id="PF00516">
    <property type="entry name" value="GP120"/>
    <property type="match status" value="1"/>
</dbReference>
<dbReference type="Pfam" id="PF00517">
    <property type="entry name" value="GP41"/>
    <property type="match status" value="1"/>
</dbReference>
<dbReference type="SUPFAM" id="SSF56502">
    <property type="entry name" value="gp120 core"/>
    <property type="match status" value="2"/>
</dbReference>
<dbReference type="SUPFAM" id="SSF58069">
    <property type="entry name" value="Virus ectodomain"/>
    <property type="match status" value="1"/>
</dbReference>
<organism>
    <name type="scientific">Human immunodeficiency virus type 1 group M subtype B (isolate MN)</name>
    <name type="common">HIV-1</name>
    <dbReference type="NCBI Taxonomy" id="11696"/>
    <lineage>
        <taxon>Viruses</taxon>
        <taxon>Riboviria</taxon>
        <taxon>Pararnavirae</taxon>
        <taxon>Artverviricota</taxon>
        <taxon>Revtraviricetes</taxon>
        <taxon>Ortervirales</taxon>
        <taxon>Retroviridae</taxon>
        <taxon>Orthoretrovirinae</taxon>
        <taxon>Lentivirus</taxon>
        <taxon>Human immunodeficiency virus type 1</taxon>
    </lineage>
</organism>
<protein>
    <recommendedName>
        <fullName evidence="1">Envelope glycoprotein gp160</fullName>
    </recommendedName>
    <alternativeName>
        <fullName evidence="1">Env polyprotein</fullName>
    </alternativeName>
    <component>
        <recommendedName>
            <fullName evidence="1">Surface protein gp120</fullName>
            <shortName evidence="1">SU</shortName>
        </recommendedName>
        <alternativeName>
            <fullName evidence="1">Glycoprotein 120</fullName>
            <shortName evidence="1">gp120</shortName>
        </alternativeName>
    </component>
    <component>
        <recommendedName>
            <fullName evidence="1">Transmembrane protein gp41</fullName>
            <shortName evidence="1">TM</shortName>
        </recommendedName>
        <alternativeName>
            <fullName evidence="1">Glycoprotein 41</fullName>
            <shortName evidence="1">gp41</shortName>
        </alternativeName>
    </component>
</protein>
<feature type="signal peptide" evidence="1">
    <location>
        <begin position="1"/>
        <end position="31"/>
    </location>
</feature>
<feature type="chain" id="PRO_0000239484" description="Envelope glycoprotein gp160" evidence="1">
    <location>
        <begin position="32"/>
        <end position="856"/>
    </location>
</feature>
<feature type="chain" id="PRO_0000038408" description="Surface protein gp120" evidence="1">
    <location>
        <begin position="32"/>
        <end position="513"/>
    </location>
</feature>
<feature type="chain" id="PRO_0000038409" description="Transmembrane protein gp41" evidence="1">
    <location>
        <begin position="514"/>
        <end position="856"/>
    </location>
</feature>
<feature type="topological domain" description="Extracellular" evidence="1">
    <location>
        <begin position="32"/>
        <end position="685"/>
    </location>
</feature>
<feature type="transmembrane region" description="Helical" evidence="1">
    <location>
        <begin position="686"/>
        <end position="706"/>
    </location>
</feature>
<feature type="topological domain" description="Cytoplasmic" evidence="1">
    <location>
        <begin position="707"/>
        <end position="856"/>
    </location>
</feature>
<feature type="region of interest" description="V1" evidence="1">
    <location>
        <begin position="130"/>
        <end position="161"/>
    </location>
</feature>
<feature type="region of interest" description="V2" evidence="1">
    <location>
        <begin position="162"/>
        <end position="201"/>
    </location>
</feature>
<feature type="region of interest" description="V3" evidence="1">
    <location>
        <begin position="301"/>
        <end position="334"/>
    </location>
</feature>
<feature type="region of interest" description="CD4-binding loop" evidence="1">
    <location>
        <begin position="367"/>
        <end position="377"/>
    </location>
</feature>
<feature type="region of interest" description="V4" evidence="1">
    <location>
        <begin position="388"/>
        <end position="418"/>
    </location>
</feature>
<feature type="region of interest" description="Essential for CD4-binding; epitope recognized by the antibody YZ23">
    <location>
        <begin position="421"/>
        <end position="433"/>
    </location>
</feature>
<feature type="region of interest" description="V5">
    <location>
        <begin position="461"/>
        <end position="473"/>
    </location>
</feature>
<feature type="region of interest" description="V5" evidence="1">
    <location>
        <begin position="463"/>
        <end position="473"/>
    </location>
</feature>
<feature type="region of interest" description="Fusion peptide" evidence="1">
    <location>
        <begin position="514"/>
        <end position="533"/>
    </location>
</feature>
<feature type="region of interest" description="Immunosuppression" evidence="1">
    <location>
        <begin position="575"/>
        <end position="593"/>
    </location>
</feature>
<feature type="region of interest" description="MPER; binding to GalCer" evidence="1">
    <location>
        <begin position="663"/>
        <end position="684"/>
    </location>
</feature>
<feature type="region of interest" description="Disordered" evidence="2">
    <location>
        <begin position="717"/>
        <end position="744"/>
    </location>
</feature>
<feature type="coiled-coil region" evidence="1">
    <location>
        <begin position="634"/>
        <end position="668"/>
    </location>
</feature>
<feature type="short sequence motif" description="YXXL motif; contains endocytosis signal" evidence="1">
    <location>
        <begin position="713"/>
        <end position="716"/>
    </location>
</feature>
<feature type="short sequence motif" description="Di-leucine internalization motif" evidence="1">
    <location>
        <begin position="855"/>
        <end position="856"/>
    </location>
</feature>
<feature type="site" description="Cleavage; by host furin" evidence="1">
    <location>
        <begin position="513"/>
        <end position="514"/>
    </location>
</feature>
<feature type="glycosylation site" description="N-linked (GlcNAc...) asparagine; by host" evidence="1">
    <location>
        <position position="87"/>
    </location>
</feature>
<feature type="glycosylation site" description="N-linked (GlcNAc...) asparagine; by host" evidence="1">
    <location>
        <position position="129"/>
    </location>
</feature>
<feature type="glycosylation site" description="N-linked (GlcNAc...) asparagine; by host" evidence="1">
    <location>
        <position position="135"/>
    </location>
</feature>
<feature type="glycosylation site" description="N-linked (GlcNAc...) asparagine; by host" evidence="1">
    <location>
        <position position="140"/>
    </location>
</feature>
<feature type="glycosylation site" description="N-linked (GlcNAc...) asparagine; by host" evidence="1">
    <location>
        <position position="141"/>
    </location>
</feature>
<feature type="glycosylation site" description="N-linked (GlcNAc...) asparagine; by host" evidence="1">
    <location>
        <position position="146"/>
    </location>
</feature>
<feature type="glycosylation site" description="N-linked (GlcNAc...) asparagine; by host" evidence="1">
    <location>
        <position position="161"/>
    </location>
</feature>
<feature type="glycosylation site" description="N-linked (GlcNAc...) asparagine; by host" evidence="1">
    <location>
        <position position="165"/>
    </location>
</feature>
<feature type="glycosylation site" description="N-linked (GlcNAc...) asparagine; by host" evidence="1">
    <location>
        <position position="191"/>
    </location>
</feature>
<feature type="glycosylation site" description="N-linked (GlcNAc...) asparagine; by host" evidence="1">
    <location>
        <position position="202"/>
    </location>
</feature>
<feature type="glycosylation site" description="N-linked (GlcNAc...) asparagine; by host" evidence="1">
    <location>
        <position position="246"/>
    </location>
</feature>
<feature type="glycosylation site" description="N-linked (GlcNAc...) asparagine; by host" evidence="1">
    <location>
        <position position="267"/>
    </location>
</feature>
<feature type="glycosylation site" description="N-linked (GlcNAc...) asparagine; by host" evidence="1">
    <location>
        <position position="281"/>
    </location>
</feature>
<feature type="glycosylation site" description="N-linked (GlcNAc...) asparagine; by host" evidence="1">
    <location>
        <position position="294"/>
    </location>
</feature>
<feature type="glycosylation site" description="N-linked (GlcNAc...) asparagine; by host" evidence="1">
    <location>
        <position position="300"/>
    </location>
</feature>
<feature type="glycosylation site" description="N-linked (GlcNAc...) asparagine; by host" evidence="1">
    <location>
        <position position="336"/>
    </location>
</feature>
<feature type="glycosylation site" description="N-linked (GlcNAc...) asparagine; by host" evidence="1">
    <location>
        <position position="343"/>
    </location>
</feature>
<feature type="glycosylation site" description="N-linked (GlcNAc...) asparagine; by host" evidence="1">
    <location>
        <position position="359"/>
    </location>
</feature>
<feature type="glycosylation site" description="N-linked (GlcNAc...) asparagine; by host" evidence="1">
    <location>
        <position position="365"/>
    </location>
</feature>
<feature type="glycosylation site" description="N-linked (GlcNAc...) asparagine; by host" evidence="1">
    <location>
        <position position="395"/>
    </location>
</feature>
<feature type="glycosylation site" description="N-linked (GlcNAc...) asparagine; by host" evidence="1">
    <location>
        <position position="401"/>
    </location>
</feature>
<feature type="glycosylation site" description="N-linked (GlcNAc...) asparagine; by host" evidence="1">
    <location>
        <position position="405"/>
    </location>
</feature>
<feature type="glycosylation site" description="N-linked (GlcNAc...) asparagine; by host" evidence="1">
    <location>
        <position position="406"/>
    </location>
</feature>
<feature type="glycosylation site" description="N-linked (GlcNAc...) asparagine; by host" evidence="1">
    <location>
        <position position="413"/>
    </location>
</feature>
<feature type="glycosylation site" description="N-linked (GlcNAc...) asparagine; by host" evidence="1">
    <location>
        <position position="448"/>
    </location>
</feature>
<feature type="glycosylation site" description="N-linked (GlcNAc...) asparagine; by host" evidence="1">
    <location>
        <position position="465"/>
    </location>
</feature>
<feature type="glycosylation site" description="N-linked (GlcNAc...) asparagine; by host" evidence="1">
    <location>
        <position position="612"/>
    </location>
</feature>
<feature type="glycosylation site" description="N-linked (GlcNAc...) asparagine; by host" evidence="1">
    <location>
        <position position="617"/>
    </location>
</feature>
<feature type="glycosylation site" description="N-linked (GlcNAc...) asparagine; by host" evidence="1">
    <location>
        <position position="626"/>
    </location>
</feature>
<feature type="glycosylation site" description="N-linked (GlcNAc...) asparagine; by host" evidence="1">
    <location>
        <position position="638"/>
    </location>
</feature>
<feature type="disulfide bond" evidence="1">
    <location>
        <begin position="53"/>
        <end position="73"/>
    </location>
</feature>
<feature type="disulfide bond" evidence="1">
    <location>
        <begin position="118"/>
        <end position="210"/>
    </location>
</feature>
<feature type="disulfide bond" evidence="1">
    <location>
        <begin position="125"/>
        <end position="201"/>
    </location>
</feature>
<feature type="disulfide bond" evidence="1">
    <location>
        <begin position="130"/>
        <end position="162"/>
    </location>
</feature>
<feature type="disulfide bond" evidence="1">
    <location>
        <begin position="223"/>
        <end position="252"/>
    </location>
</feature>
<feature type="disulfide bond" evidence="1">
    <location>
        <begin position="233"/>
        <end position="244"/>
    </location>
</feature>
<feature type="disulfide bond" evidence="1">
    <location>
        <begin position="301"/>
        <end position="335"/>
    </location>
</feature>
<feature type="disulfide bond" evidence="1">
    <location>
        <begin position="381"/>
        <end position="445"/>
    </location>
</feature>
<feature type="disulfide bond" evidence="1">
    <location>
        <begin position="388"/>
        <end position="418"/>
    </location>
</feature>
<feature type="disulfide bond" evidence="1">
    <location>
        <begin position="599"/>
        <end position="605"/>
    </location>
</feature>
<feature type="helix" evidence="3">
    <location>
        <begin position="308"/>
        <end position="310"/>
    </location>
</feature>
<feature type="strand" evidence="3">
    <location>
        <begin position="311"/>
        <end position="315"/>
    </location>
</feature>
<feature type="turn" evidence="3">
    <location>
        <begin position="316"/>
        <end position="318"/>
    </location>
</feature>
<feature type="strand" evidence="4">
    <location>
        <begin position="320"/>
        <end position="322"/>
    </location>
</feature>
<feature type="helix" evidence="5">
    <location>
        <begin position="673"/>
        <end position="675"/>
    </location>
</feature>
<feature type="helix" evidence="5">
    <location>
        <begin position="676"/>
        <end position="684"/>
    </location>
</feature>
<evidence type="ECO:0000255" key="1">
    <source>
        <dbReference type="HAMAP-Rule" id="MF_04083"/>
    </source>
</evidence>
<evidence type="ECO:0000256" key="2">
    <source>
        <dbReference type="SAM" id="MobiDB-lite"/>
    </source>
</evidence>
<evidence type="ECO:0007829" key="3">
    <source>
        <dbReference type="PDB" id="3UJI"/>
    </source>
</evidence>
<evidence type="ECO:0007829" key="4">
    <source>
        <dbReference type="PDB" id="4M1D"/>
    </source>
</evidence>
<evidence type="ECO:0007829" key="5">
    <source>
        <dbReference type="PDB" id="4XCF"/>
    </source>
</evidence>